<protein>
    <recommendedName>
        <fullName evidence="1">Protein Syd</fullName>
    </recommendedName>
</protein>
<evidence type="ECO:0000255" key="1">
    <source>
        <dbReference type="HAMAP-Rule" id="MF_01104"/>
    </source>
</evidence>
<name>SYDP_PSEA6</name>
<sequence length="186" mass="21179">MTSTVNQSLDDFMGRFAAFVKEHAEAGAIEYDEDWPSPCYATDVTPESGTSIPWKPVLREQTSEFKDLSEALELTLHPDVAQFYSRYWSDNIVAQHPSGKLQILQAWNEEDFERLQQNIVGHILMKRRLRQPETIFIALTDEDDFVLSVDNQTGAVMLEQVGLQPKEQISPDLATFLDEIEPTTTD</sequence>
<feature type="chain" id="PRO_0000298254" description="Protein Syd">
    <location>
        <begin position="1"/>
        <end position="186"/>
    </location>
</feature>
<organism>
    <name type="scientific">Pseudoalteromonas atlantica (strain T6c / ATCC BAA-1087)</name>
    <dbReference type="NCBI Taxonomy" id="3042615"/>
    <lineage>
        <taxon>Bacteria</taxon>
        <taxon>Pseudomonadati</taxon>
        <taxon>Pseudomonadota</taxon>
        <taxon>Gammaproteobacteria</taxon>
        <taxon>Alteromonadales</taxon>
        <taxon>Alteromonadaceae</taxon>
        <taxon>Paraglaciecola</taxon>
    </lineage>
</organism>
<keyword id="KW-0997">Cell inner membrane</keyword>
<keyword id="KW-1003">Cell membrane</keyword>
<keyword id="KW-0472">Membrane</keyword>
<gene>
    <name evidence="1" type="primary">syd</name>
    <name type="ordered locus">Patl_3192</name>
</gene>
<reference key="1">
    <citation type="submission" date="2006-06" db="EMBL/GenBank/DDBJ databases">
        <title>Complete sequence of Pseudoalteromonas atlantica T6c.</title>
        <authorList>
            <consortium name="US DOE Joint Genome Institute"/>
            <person name="Copeland A."/>
            <person name="Lucas S."/>
            <person name="Lapidus A."/>
            <person name="Barry K."/>
            <person name="Detter J.C."/>
            <person name="Glavina del Rio T."/>
            <person name="Hammon N."/>
            <person name="Israni S."/>
            <person name="Dalin E."/>
            <person name="Tice H."/>
            <person name="Pitluck S."/>
            <person name="Saunders E."/>
            <person name="Brettin T."/>
            <person name="Bruce D."/>
            <person name="Han C."/>
            <person name="Tapia R."/>
            <person name="Gilna P."/>
            <person name="Schmutz J."/>
            <person name="Larimer F."/>
            <person name="Land M."/>
            <person name="Hauser L."/>
            <person name="Kyrpides N."/>
            <person name="Kim E."/>
            <person name="Karls A.C."/>
            <person name="Bartlett D."/>
            <person name="Higgins B.P."/>
            <person name="Richardson P."/>
        </authorList>
    </citation>
    <scope>NUCLEOTIDE SEQUENCE [LARGE SCALE GENOMIC DNA]</scope>
    <source>
        <strain>T6c / ATCC BAA-1087</strain>
    </source>
</reference>
<proteinExistence type="inferred from homology"/>
<accession>Q15QZ0</accession>
<comment type="function">
    <text evidence="1">Interacts with the SecY protein in vivo. May bind preferentially to an uncomplexed state of SecY, thus functioning either as a chelating agent for excess SecY in the cell or as a regulatory factor that negatively controls the translocase function.</text>
</comment>
<comment type="subcellular location">
    <subcellularLocation>
        <location evidence="1">Cell inner membrane</location>
        <topology evidence="1">Peripheral membrane protein</topology>
        <orientation evidence="1">Cytoplasmic side</orientation>
    </subcellularLocation>
    <text evidence="1">Loosely associated with the cytoplasmic side of the inner membrane, probably via SecY.</text>
</comment>
<comment type="similarity">
    <text evidence="1">Belongs to the Syd family.</text>
</comment>
<dbReference type="EMBL" id="CP000388">
    <property type="protein sequence ID" value="ABG41698.1"/>
    <property type="molecule type" value="Genomic_DNA"/>
</dbReference>
<dbReference type="RefSeq" id="WP_011575928.1">
    <property type="nucleotide sequence ID" value="NC_008228.1"/>
</dbReference>
<dbReference type="SMR" id="Q15QZ0"/>
<dbReference type="STRING" id="342610.Patl_3192"/>
<dbReference type="KEGG" id="pat:Patl_3192"/>
<dbReference type="eggNOG" id="ENOG502ZCMR">
    <property type="taxonomic scope" value="Bacteria"/>
</dbReference>
<dbReference type="HOGENOM" id="CLU_121866_0_0_6"/>
<dbReference type="OrthoDB" id="5599437at2"/>
<dbReference type="Proteomes" id="UP000001981">
    <property type="component" value="Chromosome"/>
</dbReference>
<dbReference type="GO" id="GO:0009898">
    <property type="term" value="C:cytoplasmic side of plasma membrane"/>
    <property type="evidence" value="ECO:0007669"/>
    <property type="project" value="InterPro"/>
</dbReference>
<dbReference type="CDD" id="cd16323">
    <property type="entry name" value="Syd"/>
    <property type="match status" value="1"/>
</dbReference>
<dbReference type="Gene3D" id="3.40.1580.20">
    <property type="entry name" value="Syd protein"/>
    <property type="match status" value="1"/>
</dbReference>
<dbReference type="HAMAP" id="MF_01104">
    <property type="entry name" value="Syd"/>
    <property type="match status" value="1"/>
</dbReference>
<dbReference type="InterPro" id="IPR009948">
    <property type="entry name" value="Syd"/>
</dbReference>
<dbReference type="InterPro" id="IPR038228">
    <property type="entry name" value="Syd_sf"/>
</dbReference>
<dbReference type="NCBIfam" id="NF003439">
    <property type="entry name" value="PRK04968.1"/>
    <property type="match status" value="1"/>
</dbReference>
<dbReference type="Pfam" id="PF07348">
    <property type="entry name" value="Syd"/>
    <property type="match status" value="1"/>
</dbReference>